<protein>
    <recommendedName>
        <fullName>Cortexin-3</fullName>
    </recommendedName>
    <alternativeName>
        <fullName>Kidney and brain-expressed protein</fullName>
    </alternativeName>
</protein>
<feature type="chain" id="PRO_0000284513" description="Cortexin-3">
    <location>
        <begin position="1"/>
        <end position="81"/>
    </location>
</feature>
<feature type="transmembrane region" description="Helical" evidence="1">
    <location>
        <begin position="29"/>
        <end position="49"/>
    </location>
</feature>
<feature type="sequence variant" id="VAR_031763" description="In dbSNP:rs248709." evidence="2">
    <original>E</original>
    <variation>V</variation>
    <location>
        <position position="17"/>
    </location>
</feature>
<feature type="sequence variant" id="VAR_053885" description="In dbSNP:rs2280170.">
    <original>M</original>
    <variation>I</variation>
    <location>
        <position position="23"/>
    </location>
</feature>
<gene>
    <name type="primary">CTXN3</name>
    <name type="synonym">KABE</name>
</gene>
<keyword id="KW-0472">Membrane</keyword>
<keyword id="KW-1185">Reference proteome</keyword>
<keyword id="KW-0812">Transmembrane</keyword>
<keyword id="KW-1133">Transmembrane helix</keyword>
<sequence>MDGGQPIPSSLVPLGNESADSSMSLEQKMTFVFVILLFIFLGILIVRCFRILLDPYRSMPTSTWADGLEGLEKGQFDHALA</sequence>
<proteinExistence type="evidence at protein level"/>
<reference key="1">
    <citation type="submission" date="2005-07" db="EMBL/GenBank/DDBJ databases">
        <title>In silico-initiated cloning and molecular characterization of KABE, a novel gene specifically expressed in kidney, brain and well conserved in vertebrate.</title>
        <authorList>
            <person name="Wang H."/>
            <person name="Chang J."/>
            <person name="Ma X."/>
            <person name="Zhang Y."/>
            <person name="Ma F."/>
        </authorList>
    </citation>
    <scope>NUCLEOTIDE SEQUENCE [MRNA]</scope>
    <source>
        <tissue>Kidney</tissue>
    </source>
</reference>
<reference key="2">
    <citation type="submission" date="2005-09" db="EMBL/GenBank/DDBJ databases">
        <authorList>
            <person name="Mural R.J."/>
            <person name="Istrail S."/>
            <person name="Sutton G.G."/>
            <person name="Florea L."/>
            <person name="Halpern A.L."/>
            <person name="Mobarry C.M."/>
            <person name="Lippert R."/>
            <person name="Walenz B."/>
            <person name="Shatkay H."/>
            <person name="Dew I."/>
            <person name="Miller J.R."/>
            <person name="Flanigan M.J."/>
            <person name="Edwards N.J."/>
            <person name="Bolanos R."/>
            <person name="Fasulo D."/>
            <person name="Halldorsson B.V."/>
            <person name="Hannenhalli S."/>
            <person name="Turner R."/>
            <person name="Yooseph S."/>
            <person name="Lu F."/>
            <person name="Nusskern D.R."/>
            <person name="Shue B.C."/>
            <person name="Zheng X.H."/>
            <person name="Zhong F."/>
            <person name="Delcher A.L."/>
            <person name="Huson D.H."/>
            <person name="Kravitz S.A."/>
            <person name="Mouchard L."/>
            <person name="Reinert K."/>
            <person name="Remington K.A."/>
            <person name="Clark A.G."/>
            <person name="Waterman M.S."/>
            <person name="Eichler E.E."/>
            <person name="Adams M.D."/>
            <person name="Hunkapiller M.W."/>
            <person name="Myers E.W."/>
            <person name="Venter J.C."/>
        </authorList>
    </citation>
    <scope>NUCLEOTIDE SEQUENCE [LARGE SCALE GENOMIC DNA]</scope>
    <scope>VARIANT VAL-17</scope>
</reference>
<reference key="3">
    <citation type="journal article" date="2004" name="Genome Res.">
        <title>The status, quality, and expansion of the NIH full-length cDNA project: the Mammalian Gene Collection (MGC).</title>
        <authorList>
            <consortium name="The MGC Project Team"/>
        </authorList>
    </citation>
    <scope>NUCLEOTIDE SEQUENCE [LARGE SCALE MRNA]</scope>
    <source>
        <tissue>Brain</tissue>
    </source>
</reference>
<organism>
    <name type="scientific">Homo sapiens</name>
    <name type="common">Human</name>
    <dbReference type="NCBI Taxonomy" id="9606"/>
    <lineage>
        <taxon>Eukaryota</taxon>
        <taxon>Metazoa</taxon>
        <taxon>Chordata</taxon>
        <taxon>Craniata</taxon>
        <taxon>Vertebrata</taxon>
        <taxon>Euteleostomi</taxon>
        <taxon>Mammalia</taxon>
        <taxon>Eutheria</taxon>
        <taxon>Euarchontoglires</taxon>
        <taxon>Primates</taxon>
        <taxon>Haplorrhini</taxon>
        <taxon>Catarrhini</taxon>
        <taxon>Hominidae</taxon>
        <taxon>Homo</taxon>
    </lineage>
</organism>
<name>CTXN3_HUMAN</name>
<evidence type="ECO:0000255" key="1"/>
<evidence type="ECO:0000269" key="2">
    <source ref="2"/>
</evidence>
<evidence type="ECO:0000305" key="3"/>
<dbReference type="EMBL" id="AB219764">
    <property type="protein sequence ID" value="BAE06183.1"/>
    <property type="molecule type" value="mRNA"/>
</dbReference>
<dbReference type="EMBL" id="AB219832">
    <property type="protein sequence ID" value="BAE06184.1"/>
    <property type="molecule type" value="mRNA"/>
</dbReference>
<dbReference type="EMBL" id="CH471062">
    <property type="protein sequence ID" value="EAW62400.1"/>
    <property type="molecule type" value="Genomic_DNA"/>
</dbReference>
<dbReference type="EMBL" id="CH471062">
    <property type="protein sequence ID" value="EAW62401.1"/>
    <property type="molecule type" value="Genomic_DNA"/>
</dbReference>
<dbReference type="EMBL" id="BC147012">
    <property type="protein sequence ID" value="AAI47013.1"/>
    <property type="molecule type" value="mRNA"/>
</dbReference>
<dbReference type="CCDS" id="CCDS34221.1"/>
<dbReference type="RefSeq" id="NP_001041717.1">
    <property type="nucleotide sequence ID" value="NM_001048252.3"/>
</dbReference>
<dbReference type="RefSeq" id="NP_001120857.1">
    <property type="nucleotide sequence ID" value="NM_001127385.2"/>
</dbReference>
<dbReference type="SMR" id="Q4LDR2"/>
<dbReference type="BioGRID" id="534792">
    <property type="interactions" value="59"/>
</dbReference>
<dbReference type="FunCoup" id="Q4LDR2">
    <property type="interactions" value="33"/>
</dbReference>
<dbReference type="IntAct" id="Q4LDR2">
    <property type="interactions" value="58"/>
</dbReference>
<dbReference type="STRING" id="9606.ENSP00000368758"/>
<dbReference type="iPTMnet" id="Q4LDR2"/>
<dbReference type="PhosphoSitePlus" id="Q4LDR2"/>
<dbReference type="BioMuta" id="CTXN3"/>
<dbReference type="DMDM" id="121944345"/>
<dbReference type="PaxDb" id="9606-ENSP00000368758"/>
<dbReference type="DNASU" id="613212"/>
<dbReference type="Ensembl" id="ENST00000379445.8">
    <property type="protein sequence ID" value="ENSP00000368758.3"/>
    <property type="gene ID" value="ENSG00000205279.9"/>
</dbReference>
<dbReference type="Ensembl" id="ENST00000395322.3">
    <property type="protein sequence ID" value="ENSP00000378732.3"/>
    <property type="gene ID" value="ENSG00000205279.9"/>
</dbReference>
<dbReference type="Ensembl" id="ENST00000620385.1">
    <property type="protein sequence ID" value="ENSP00000482081.1"/>
    <property type="gene ID" value="ENSG00000205279.9"/>
</dbReference>
<dbReference type="GeneID" id="613212"/>
<dbReference type="KEGG" id="hsa:613212"/>
<dbReference type="MANE-Select" id="ENST00000379445.8">
    <property type="protein sequence ID" value="ENSP00000368758.3"/>
    <property type="RefSeq nucleotide sequence ID" value="NM_001048252.3"/>
    <property type="RefSeq protein sequence ID" value="NP_001041717.1"/>
</dbReference>
<dbReference type="UCSC" id="uc003kul.5">
    <property type="organism name" value="human"/>
</dbReference>
<dbReference type="AGR" id="HGNC:31110"/>
<dbReference type="CTD" id="613212"/>
<dbReference type="DisGeNET" id="613212"/>
<dbReference type="GeneCards" id="CTXN3"/>
<dbReference type="HGNC" id="HGNC:31110">
    <property type="gene designation" value="CTXN3"/>
</dbReference>
<dbReference type="HPA" id="ENSG00000205279">
    <property type="expression patterns" value="Tissue enhanced (brain, kidney)"/>
</dbReference>
<dbReference type="MIM" id="618746">
    <property type="type" value="gene"/>
</dbReference>
<dbReference type="neXtProt" id="NX_Q4LDR2"/>
<dbReference type="OpenTargets" id="ENSG00000205279"/>
<dbReference type="PharmGKB" id="PA134959223"/>
<dbReference type="VEuPathDB" id="HostDB:ENSG00000205279"/>
<dbReference type="eggNOG" id="ENOG502S3V3">
    <property type="taxonomic scope" value="Eukaryota"/>
</dbReference>
<dbReference type="GeneTree" id="ENSGT00940000154412"/>
<dbReference type="HOGENOM" id="CLU_193122_0_0_1"/>
<dbReference type="InParanoid" id="Q4LDR2"/>
<dbReference type="OMA" id="FSWLMEA"/>
<dbReference type="OrthoDB" id="9947540at2759"/>
<dbReference type="PAN-GO" id="Q4LDR2">
    <property type="GO annotations" value="0 GO annotations based on evolutionary models"/>
</dbReference>
<dbReference type="PhylomeDB" id="Q4LDR2"/>
<dbReference type="TreeFam" id="TF333403"/>
<dbReference type="PathwayCommons" id="Q4LDR2"/>
<dbReference type="SignaLink" id="Q4LDR2"/>
<dbReference type="BioGRID-ORCS" id="613212">
    <property type="hits" value="6 hits in 1137 CRISPR screens"/>
</dbReference>
<dbReference type="GenomeRNAi" id="613212"/>
<dbReference type="Pharos" id="Q4LDR2">
    <property type="development level" value="Tbio"/>
</dbReference>
<dbReference type="PRO" id="PR:Q4LDR2"/>
<dbReference type="Proteomes" id="UP000005640">
    <property type="component" value="Chromosome 5"/>
</dbReference>
<dbReference type="RNAct" id="Q4LDR2">
    <property type="molecule type" value="protein"/>
</dbReference>
<dbReference type="Bgee" id="ENSG00000205279">
    <property type="expression patterns" value="Expressed in kidney epithelium and 76 other cell types or tissues"/>
</dbReference>
<dbReference type="GO" id="GO:0016020">
    <property type="term" value="C:membrane"/>
    <property type="evidence" value="ECO:0007669"/>
    <property type="project" value="UniProtKB-SubCell"/>
</dbReference>
<dbReference type="InterPro" id="IPR020066">
    <property type="entry name" value="Cortexin"/>
</dbReference>
<dbReference type="PANTHER" id="PTHR16736">
    <property type="entry name" value="CORTEXIN-1-RELATED"/>
    <property type="match status" value="1"/>
</dbReference>
<dbReference type="PANTHER" id="PTHR16736:SF1">
    <property type="entry name" value="CORTEXIN-3"/>
    <property type="match status" value="1"/>
</dbReference>
<dbReference type="Pfam" id="PF11057">
    <property type="entry name" value="Cortexin"/>
    <property type="match status" value="1"/>
</dbReference>
<accession>Q4LDR2</accession>
<accession>B2RV32</accession>
<accession>D3DQ82</accession>
<comment type="interaction">
    <interactant intactId="EBI-12019274">
        <id>Q4LDR2</id>
    </interactant>
    <interactant intactId="EBI-17979264">
        <id>Q86Y34</id>
        <label>ADGRG3</label>
    </interactant>
    <organismsDiffer>false</organismsDiffer>
    <experiments>3</experiments>
</comment>
<comment type="interaction">
    <interactant intactId="EBI-12019274">
        <id>Q4LDR2</id>
    </interactant>
    <interactant intactId="EBI-13059134">
        <id>Q13520</id>
        <label>AQP6</label>
    </interactant>
    <organismsDiffer>false</organismsDiffer>
    <experiments>3</experiments>
</comment>
<comment type="interaction">
    <interactant intactId="EBI-12019274">
        <id>Q4LDR2</id>
    </interactant>
    <interactant intactId="EBI-17444777">
        <id>O43315</id>
        <label>AQP9</label>
    </interactant>
    <organismsDiffer>false</organismsDiffer>
    <experiments>3</experiments>
</comment>
<comment type="interaction">
    <interactant intactId="EBI-12019274">
        <id>Q4LDR2</id>
    </interactant>
    <interactant intactId="EBI-1054481">
        <id>P54709</id>
        <label>ATP1B3</label>
    </interactant>
    <organismsDiffer>false</organismsDiffer>
    <experiments>3</experiments>
</comment>
<comment type="interaction">
    <interactant intactId="EBI-12019274">
        <id>Q4LDR2</id>
    </interactant>
    <interactant intactId="EBI-700794">
        <id>Q13323</id>
        <label>BIK</label>
    </interactant>
    <organismsDiffer>false</organismsDiffer>
    <experiments>3</experiments>
</comment>
<comment type="interaction">
    <interactant intactId="EBI-12019274">
        <id>Q4LDR2</id>
    </interactant>
    <interactant intactId="EBI-17841208">
        <id>Q7KYR7-4</id>
        <label>BTN2A1</label>
    </interactant>
    <organismsDiffer>false</organismsDiffer>
    <experiments>3</experiments>
</comment>
<comment type="interaction">
    <interactant intactId="EBI-12019274">
        <id>Q4LDR2</id>
    </interactant>
    <interactant intactId="EBI-18010148">
        <id>Q496F6</id>
        <label>CD300E</label>
    </interactant>
    <organismsDiffer>false</organismsDiffer>
    <experiments>3</experiments>
</comment>
<comment type="interaction">
    <interactant intactId="EBI-12019274">
        <id>Q4LDR2</id>
    </interactant>
    <interactant intactId="EBI-6657396">
        <id>P19397</id>
        <label>CD53</label>
    </interactant>
    <organismsDiffer>false</organismsDiffer>
    <experiments>3</experiments>
</comment>
<comment type="interaction">
    <interactant intactId="EBI-12019274">
        <id>Q4LDR2</id>
    </interactant>
    <interactant intactId="EBI-7797864">
        <id>P11912</id>
        <label>CD79A</label>
    </interactant>
    <organismsDiffer>false</organismsDiffer>
    <experiments>3</experiments>
</comment>
<comment type="interaction">
    <interactant intactId="EBI-12019274">
        <id>Q4LDR2</id>
    </interactant>
    <interactant intactId="EBI-2622997">
        <id>Q9HA82</id>
        <label>CERS4</label>
    </interactant>
    <organismsDiffer>false</organismsDiffer>
    <experiments>3</experiments>
</comment>
<comment type="interaction">
    <interactant intactId="EBI-12019274">
        <id>Q4LDR2</id>
    </interactant>
    <interactant intactId="EBI-11742599">
        <id>O95500</id>
        <label>CLDN14</label>
    </interactant>
    <organismsDiffer>false</organismsDiffer>
    <experiments>3</experiments>
</comment>
<comment type="interaction">
    <interactant intactId="EBI-12019274">
        <id>Q4LDR2</id>
    </interactant>
    <interactant intactId="EBI-11977093">
        <id>Q6ZS10</id>
        <label>CLEC17A</label>
    </interactant>
    <organismsDiffer>false</organismsDiffer>
    <experiments>3</experiments>
</comment>
<comment type="interaction">
    <interactant intactId="EBI-12019274">
        <id>Q4LDR2</id>
    </interactant>
    <interactant intactId="EBI-11989440">
        <id>Q9BXN2-6</id>
        <label>CLEC7A</label>
    </interactant>
    <organismsDiffer>false</organismsDiffer>
    <experiments>3</experiments>
</comment>
<comment type="interaction">
    <interactant intactId="EBI-12019274">
        <id>Q4LDR2</id>
    </interactant>
    <interactant intactId="EBI-17274839">
        <id>P58418</id>
        <label>CLRN1</label>
    </interactant>
    <organismsDiffer>false</organismsDiffer>
    <experiments>3</experiments>
</comment>
<comment type="interaction">
    <interactant intactId="EBI-12019274">
        <id>Q4LDR2</id>
    </interactant>
    <interactant intactId="EBI-724524">
        <id>O75208</id>
        <label>COQ9</label>
    </interactant>
    <organismsDiffer>false</organismsDiffer>
    <experiments>3</experiments>
</comment>
<comment type="interaction">
    <interactant intactId="EBI-12019274">
        <id>Q4LDR2</id>
    </interactant>
    <interactant intactId="EBI-18013275">
        <id>Q7Z7G2</id>
        <label>CPLX4</label>
    </interactant>
    <organismsDiffer>false</organismsDiffer>
    <experiments>3</experiments>
</comment>
<comment type="interaction">
    <interactant intactId="EBI-12019274">
        <id>Q4LDR2</id>
    </interactant>
    <interactant intactId="EBI-6942903">
        <id>Q96BA8</id>
        <label>CREB3L1</label>
    </interactant>
    <organismsDiffer>false</organismsDiffer>
    <experiments>3</experiments>
</comment>
<comment type="interaction">
    <interactant intactId="EBI-12019274">
        <id>Q4LDR2</id>
    </interactant>
    <interactant intactId="EBI-1030991">
        <id>P16410</id>
        <label>CTLA4</label>
    </interactant>
    <organismsDiffer>false</organismsDiffer>
    <experiments>3</experiments>
</comment>
<comment type="interaction">
    <interactant intactId="EBI-12019274">
        <id>Q4LDR2</id>
    </interactant>
    <interactant intactId="EBI-529425">
        <id>Q92838</id>
        <label>EDA</label>
    </interactant>
    <organismsDiffer>false</organismsDiffer>
    <experiments>3</experiments>
</comment>
<comment type="interaction">
    <interactant intactId="EBI-12019274">
        <id>Q4LDR2</id>
    </interactant>
    <interactant intactId="EBI-781551">
        <id>Q9Y282</id>
        <label>ERGIC3</label>
    </interactant>
    <organismsDiffer>false</organismsDiffer>
    <experiments>3</experiments>
</comment>
<comment type="interaction">
    <interactant intactId="EBI-12019274">
        <id>Q4LDR2</id>
    </interactant>
    <interactant intactId="EBI-18304435">
        <id>Q5JX71</id>
        <label>FAM209A</label>
    </interactant>
    <organismsDiffer>false</organismsDiffer>
    <experiments>3</experiments>
</comment>
<comment type="interaction">
    <interactant intactId="EBI-12019274">
        <id>Q4LDR2</id>
    </interactant>
    <interactant intactId="EBI-17762181">
        <id>O14843</id>
        <label>FFAR3</label>
    </interactant>
    <organismsDiffer>false</organismsDiffer>
    <experiments>3</experiments>
</comment>
<comment type="interaction">
    <interactant intactId="EBI-12019274">
        <id>Q4LDR2</id>
    </interactant>
    <interactant intactId="EBI-12817667">
        <id>Q11130</id>
        <label>FUT7</label>
    </interactant>
    <organismsDiffer>false</organismsDiffer>
    <experiments>3</experiments>
</comment>
<comment type="interaction">
    <interactant intactId="EBI-12019274">
        <id>Q4LDR2</id>
    </interactant>
    <interactant intactId="EBI-17458373">
        <id>P48165</id>
        <label>GJA8</label>
    </interactant>
    <organismsDiffer>false</organismsDiffer>
    <experiments>3</experiments>
</comment>
<comment type="interaction">
    <interactant intactId="EBI-12019274">
        <id>Q4LDR2</id>
    </interactant>
    <interactant intactId="EBI-17565645">
        <id>P08034</id>
        <label>GJB1</label>
    </interactant>
    <organismsDiffer>false</organismsDiffer>
    <experiments>3</experiments>
</comment>
<comment type="interaction">
    <interactant intactId="EBI-12019274">
        <id>Q4LDR2</id>
    </interactant>
    <interactant intactId="EBI-3909454">
        <id>O95377</id>
        <label>GJB5</label>
    </interactant>
    <organismsDiffer>false</organismsDiffer>
    <experiments>3</experiments>
</comment>
<comment type="interaction">
    <interactant intactId="EBI-12019274">
        <id>Q4LDR2</id>
    </interactant>
    <interactant intactId="EBI-13345167">
        <id>Q8TDT2</id>
        <label>GPR152</label>
    </interactant>
    <organismsDiffer>false</organismsDiffer>
    <experiments>3</experiments>
</comment>
<comment type="interaction">
    <interactant intactId="EBI-12019274">
        <id>Q4LDR2</id>
    </interactant>
    <interactant intactId="EBI-18076404">
        <id>O15529</id>
        <label>GPR42</label>
    </interactant>
    <organismsDiffer>false</organismsDiffer>
    <experiments>3</experiments>
</comment>
<comment type="interaction">
    <interactant intactId="EBI-12019274">
        <id>Q4LDR2</id>
    </interactant>
    <interactant intactId="EBI-12808020">
        <id>Q9BZJ8</id>
        <label>GPR61</label>
    </interactant>
    <organismsDiffer>false</organismsDiffer>
    <experiments>3</experiments>
</comment>
<comment type="interaction">
    <interactant intactId="EBI-12019274">
        <id>Q4LDR2</id>
    </interactant>
    <interactant intactId="EBI-373215">
        <id>Q8IU57</id>
        <label>IFNLR1</label>
    </interactant>
    <organismsDiffer>false</organismsDiffer>
    <experiments>3</experiments>
</comment>
<comment type="interaction">
    <interactant intactId="EBI-12019274">
        <id>Q4LDR2</id>
    </interactant>
    <interactant intactId="EBI-749265">
        <id>Q8N6L0</id>
        <label>KASH5</label>
    </interactant>
    <organismsDiffer>false</organismsDiffer>
    <experiments>3</experiments>
</comment>
<comment type="interaction">
    <interactant intactId="EBI-12019274">
        <id>Q4LDR2</id>
    </interactant>
    <interactant intactId="EBI-17272405">
        <id>Q8N743</id>
        <label>KIR3DL3</label>
    </interactant>
    <organismsDiffer>false</organismsDiffer>
    <experiments>3</experiments>
</comment>
<comment type="interaction">
    <interactant intactId="EBI-12019274">
        <id>Q4LDR2</id>
    </interactant>
    <interactant intactId="EBI-9018187">
        <id>P26715</id>
        <label>KLRC1</label>
    </interactant>
    <organismsDiffer>false</organismsDiffer>
    <experiments>3</experiments>
</comment>
<comment type="interaction">
    <interactant intactId="EBI-12019274">
        <id>Q4LDR2</id>
    </interactant>
    <interactant intactId="EBI-3267258">
        <id>Q86VI4</id>
        <label>LAPTM4B</label>
    </interactant>
    <organismsDiffer>false</organismsDiffer>
    <experiments>3</experiments>
</comment>
<comment type="interaction">
    <interactant intactId="EBI-12019274">
        <id>Q4LDR2</id>
    </interactant>
    <interactant intactId="EBI-10173166">
        <id>Q5T700</id>
        <label>LDLRAD1</label>
    </interactant>
    <organismsDiffer>false</organismsDiffer>
    <experiments>3</experiments>
</comment>
<comment type="interaction">
    <interactant intactId="EBI-12019274">
        <id>Q4LDR2</id>
    </interactant>
    <interactant intactId="EBI-2820517">
        <id>Q8TAF8</id>
        <label>LHFPL5</label>
    </interactant>
    <organismsDiffer>false</organismsDiffer>
    <experiments>3</experiments>
</comment>
<comment type="interaction">
    <interactant intactId="EBI-12019274">
        <id>Q4LDR2</id>
    </interactant>
    <interactant intactId="EBI-10264855">
        <id>Q8N112</id>
        <label>LSMEM2</label>
    </interactant>
    <organismsDiffer>false</organismsDiffer>
    <experiments>3</experiments>
</comment>
<comment type="interaction">
    <interactant intactId="EBI-12019274">
        <id>Q4LDR2</id>
    </interactant>
    <interactant intactId="EBI-11956541">
        <id>Q9GZY8-5</id>
        <label>MFF</label>
    </interactant>
    <organismsDiffer>false</organismsDiffer>
    <experiments>3</experiments>
</comment>
<comment type="interaction">
    <interactant intactId="EBI-12019274">
        <id>Q4LDR2</id>
    </interactant>
    <interactant intactId="EBI-11324706">
        <id>Q99735</id>
        <label>MGST2</label>
    </interactant>
    <organismsDiffer>false</organismsDiffer>
    <experiments>5</experiments>
</comment>
<comment type="interaction">
    <interactant intactId="EBI-12019274">
        <id>Q4LDR2</id>
    </interactant>
    <interactant intactId="EBI-3923617">
        <id>Q9H2K0</id>
        <label>MTIF3</label>
    </interactant>
    <organismsDiffer>false</organismsDiffer>
    <experiments>3</experiments>
</comment>
<comment type="interaction">
    <interactant intactId="EBI-12019274">
        <id>Q4LDR2</id>
    </interactant>
    <interactant intactId="EBI-10247000">
        <id>Q6IBW4-4</id>
        <label>NCAPH2</label>
    </interactant>
    <organismsDiffer>false</organismsDiffer>
    <experiments>3</experiments>
</comment>
<comment type="interaction">
    <interactant intactId="EBI-12019274">
        <id>Q4LDR2</id>
    </interactant>
    <interactant intactId="EBI-2624456">
        <id>P41143</id>
        <label>OPRD1</label>
    </interactant>
    <organismsDiffer>false</organismsDiffer>
    <experiments>3</experiments>
</comment>
<comment type="interaction">
    <interactant intactId="EBI-12019274">
        <id>Q4LDR2</id>
    </interactant>
    <interactant intactId="EBI-12807478">
        <id>P35372-10</id>
        <label>OPRM1</label>
    </interactant>
    <organismsDiffer>false</organismsDiffer>
    <experiments>3</experiments>
</comment>
<comment type="interaction">
    <interactant intactId="EBI-12019274">
        <id>Q4LDR2</id>
    </interactant>
    <interactant intactId="EBI-4319734">
        <id>Q9H813</id>
        <label>PACC1</label>
    </interactant>
    <organismsDiffer>false</organismsDiffer>
    <experiments>3</experiments>
</comment>
<comment type="interaction">
    <interactant intactId="EBI-12019274">
        <id>Q4LDR2</id>
    </interactant>
    <interactant intactId="EBI-2803478">
        <id>Q8NEB5</id>
        <label>PLPP5</label>
    </interactant>
    <organismsDiffer>false</organismsDiffer>
    <experiments>3</experiments>
</comment>
<comment type="interaction">
    <interactant intactId="EBI-12019274">
        <id>Q4LDR2</id>
    </interactant>
    <interactant intactId="EBI-3919694">
        <id>P15151</id>
        <label>PVR</label>
    </interactant>
    <organismsDiffer>false</organismsDiffer>
    <experiments>3</experiments>
</comment>
<comment type="interaction">
    <interactant intactId="EBI-12019274">
        <id>Q4LDR2</id>
    </interactant>
    <interactant intactId="EBI-17247926">
        <id>Q9NY72</id>
        <label>SCN3B</label>
    </interactant>
    <organismsDiffer>false</organismsDiffer>
    <experiments>3</experiments>
</comment>
<comment type="interaction">
    <interactant intactId="EBI-12019274">
        <id>Q4LDR2</id>
    </interactant>
    <interactant intactId="EBI-18114847">
        <id>Q12908</id>
        <label>SLC10A2</label>
    </interactant>
    <organismsDiffer>false</organismsDiffer>
    <experiments>3</experiments>
</comment>
<comment type="interaction">
    <interactant intactId="EBI-12019274">
        <id>Q4LDR2</id>
    </interactant>
    <interactant intactId="EBI-17498703">
        <id>Q9HBV2</id>
        <label>SPACA1</label>
    </interactant>
    <organismsDiffer>false</organismsDiffer>
    <experiments>3</experiments>
</comment>
<comment type="interaction">
    <interactant intactId="EBI-12019274">
        <id>Q4LDR2</id>
    </interactant>
    <interactant intactId="EBI-1211440">
        <id>P27105</id>
        <label>STOM</label>
    </interactant>
    <organismsDiffer>false</organismsDiffer>
    <experiments>3</experiments>
</comment>
<comment type="interaction">
    <interactant intactId="EBI-12019274">
        <id>Q4LDR2</id>
    </interactant>
    <interactant intactId="EBI-12947623">
        <id>Q96MV1</id>
        <label>TLCD4</label>
    </interactant>
    <organismsDiffer>false</organismsDiffer>
    <experiments>3</experiments>
</comment>
<comment type="interaction">
    <interactant intactId="EBI-12019274">
        <id>Q4LDR2</id>
    </interactant>
    <interactant intactId="EBI-6448756">
        <id>Q96DZ7</id>
        <label>TM4SF19</label>
    </interactant>
    <organismsDiffer>false</organismsDiffer>
    <experiments>3</experiments>
</comment>
<comment type="interaction">
    <interactant intactId="EBI-12019274">
        <id>Q4LDR2</id>
    </interactant>
    <interactant intactId="EBI-2821497">
        <id>Q9BVX2</id>
        <label>TMEM106C</label>
    </interactant>
    <organismsDiffer>false</organismsDiffer>
    <experiments>3</experiments>
</comment>
<comment type="interaction">
    <interactant intactId="EBI-12019274">
        <id>Q4LDR2</id>
    </interactant>
    <interactant intactId="EBI-17684533">
        <id>Q9NRX6</id>
        <label>TMEM167B</label>
    </interactant>
    <organismsDiffer>false</organismsDiffer>
    <experiments>3</experiments>
</comment>
<comment type="interaction">
    <interactant intactId="EBI-12019274">
        <id>Q4LDR2</id>
    </interactant>
    <interactant intactId="EBI-11724423">
        <id>Q7Z7N9</id>
        <label>TMEM179B</label>
    </interactant>
    <organismsDiffer>false</organismsDiffer>
    <experiments>3</experiments>
</comment>
<comment type="interaction">
    <interactant intactId="EBI-12019274">
        <id>Q4LDR2</id>
    </interactant>
    <interactant intactId="EBI-12345267">
        <id>O15393-2</id>
        <label>TMPRSS2</label>
    </interactant>
    <organismsDiffer>false</organismsDiffer>
    <experiments>3</experiments>
</comment>
<comment type="interaction">
    <interactant intactId="EBI-12019274">
        <id>Q4LDR2</id>
    </interactant>
    <interactant intactId="EBI-6447886">
        <id>Q9Y320</id>
        <label>TMX2</label>
    </interactant>
    <organismsDiffer>false</organismsDiffer>
    <experiments>3</experiments>
</comment>
<comment type="interaction">
    <interactant intactId="EBI-12019274">
        <id>Q4LDR2</id>
    </interactant>
    <interactant intactId="EBI-2466403">
        <id>O95859</id>
        <label>TSPAN12</label>
    </interactant>
    <organismsDiffer>false</organismsDiffer>
    <experiments>3</experiments>
</comment>
<comment type="subcellular location">
    <subcellularLocation>
        <location evidence="3">Membrane</location>
        <topology evidence="3">Single-pass membrane protein</topology>
    </subcellularLocation>
</comment>
<comment type="similarity">
    <text evidence="3">Belongs to the cortexin family.</text>
</comment>